<keyword id="KW-0903">Direct protein sequencing</keyword>
<keyword id="KW-0597">Phosphoprotein</keyword>
<keyword id="KW-0687">Ribonucleoprotein</keyword>
<keyword id="KW-0689">Ribosomal protein</keyword>
<protein>
    <recommendedName>
        <fullName evidence="3">Large ribosomal subunit protein P2-A</fullName>
    </recommendedName>
    <alternativeName>
        <fullName>60S acidic ribosomal protein P2-A</fullName>
        <shortName>P</shortName>
    </alternativeName>
    <alternativeName>
        <fullName>L12E</fullName>
    </alternativeName>
    <alternativeName>
        <fullName>P-JL5</fullName>
    </alternativeName>
</protein>
<accession>P23632</accession>
<sequence length="107" mass="10512">MKYLAAYALVGLSGGTPSKSAVEAVLKAAGVPVDPSRVDALFAEFAGKDFDTVCTEGKSKLVGGVTRPNAATASAPTAAAAASSGAAAPAAAAEEEEDDDMGFGLFD</sequence>
<proteinExistence type="evidence at protein level"/>
<dbReference type="EMBL" id="X52323">
    <property type="protein sequence ID" value="CAA36557.1"/>
    <property type="molecule type" value="mRNA"/>
</dbReference>
<dbReference type="EMBL" id="X69508">
    <property type="protein sequence ID" value="CAA49260.1"/>
    <property type="molecule type" value="mRNA"/>
</dbReference>
<dbReference type="EMBL" id="X69509">
    <property type="protein sequence ID" value="CAA49261.1"/>
    <property type="molecule type" value="mRNA"/>
</dbReference>
<dbReference type="EMBL" id="X69510">
    <property type="protein sequence ID" value="CAA49262.1"/>
    <property type="molecule type" value="mRNA"/>
</dbReference>
<dbReference type="EMBL" id="X75030">
    <property type="protein sequence ID" value="CAA52938.1"/>
    <property type="molecule type" value="Genomic_DNA"/>
</dbReference>
<dbReference type="EMBL" id="M72710">
    <property type="protein sequence ID" value="AAA30210.1"/>
    <property type="molecule type" value="mRNA"/>
</dbReference>
<dbReference type="PIR" id="A45641">
    <property type="entry name" value="A45641"/>
</dbReference>
<dbReference type="PIR" id="S12585">
    <property type="entry name" value="R5UT2E"/>
</dbReference>
<dbReference type="PIR" id="S31435">
    <property type="entry name" value="S31435"/>
</dbReference>
<dbReference type="PIR" id="S59918">
    <property type="entry name" value="S59918"/>
</dbReference>
<dbReference type="PIR" id="S59919">
    <property type="entry name" value="S59919"/>
</dbReference>
<dbReference type="RefSeq" id="XP_818851.1">
    <property type="nucleotide sequence ID" value="XM_813758.1"/>
</dbReference>
<dbReference type="SMR" id="P23632"/>
<dbReference type="ABCD" id="P23632">
    <property type="antibodies" value="2 sequenced antibodies"/>
</dbReference>
<dbReference type="GeneID" id="3551170"/>
<dbReference type="KEGG" id="tcr:510643.140"/>
<dbReference type="VEuPathDB" id="TriTrypDB:BCY84_08555"/>
<dbReference type="VEuPathDB" id="TriTrypDB:C4B63_247g120c"/>
<dbReference type="VEuPathDB" id="TriTrypDB:TcBrA4_0027130"/>
<dbReference type="VEuPathDB" id="TriTrypDB:TcCL_ESM00973"/>
<dbReference type="VEuPathDB" id="TriTrypDB:TcCLB.509165.40"/>
<dbReference type="VEuPathDB" id="TriTrypDB:TcCLB.510643.140"/>
<dbReference type="VEuPathDB" id="TriTrypDB:TcG_00931"/>
<dbReference type="OMA" id="MKVIASY"/>
<dbReference type="OrthoDB" id="1227494at2759"/>
<dbReference type="GO" id="GO:0022625">
    <property type="term" value="C:cytosolic large ribosomal subunit"/>
    <property type="evidence" value="ECO:0007669"/>
    <property type="project" value="InterPro"/>
</dbReference>
<dbReference type="GO" id="GO:0003735">
    <property type="term" value="F:structural constituent of ribosome"/>
    <property type="evidence" value="ECO:0007669"/>
    <property type="project" value="InterPro"/>
</dbReference>
<dbReference type="GO" id="GO:0002182">
    <property type="term" value="P:cytoplasmic translational elongation"/>
    <property type="evidence" value="ECO:0007669"/>
    <property type="project" value="InterPro"/>
</dbReference>
<dbReference type="CDD" id="cd05833">
    <property type="entry name" value="Ribosomal_P2"/>
    <property type="match status" value="1"/>
</dbReference>
<dbReference type="DisProt" id="DP00845"/>
<dbReference type="FunFam" id="1.10.10.1410:FF:000002">
    <property type="entry name" value="60S acidic ribosomal protein P2"/>
    <property type="match status" value="1"/>
</dbReference>
<dbReference type="Gene3D" id="1.10.10.1410">
    <property type="match status" value="1"/>
</dbReference>
<dbReference type="HAMAP" id="MF_01478">
    <property type="entry name" value="Ribosomal_L12_arch"/>
    <property type="match status" value="1"/>
</dbReference>
<dbReference type="InterPro" id="IPR038716">
    <property type="entry name" value="P1/P2_N_sf"/>
</dbReference>
<dbReference type="InterPro" id="IPR027534">
    <property type="entry name" value="Ribosomal_P1/P2"/>
</dbReference>
<dbReference type="InterPro" id="IPR001859">
    <property type="entry name" value="Ribosomal_P1/P2_euk"/>
</dbReference>
<dbReference type="InterPro" id="IPR044076">
    <property type="entry name" value="Ribosomal_P2"/>
</dbReference>
<dbReference type="PANTHER" id="PTHR21141">
    <property type="entry name" value="60S ACIDIC RIBOSOMAL PROTEIN FAMILY MEMBER"/>
    <property type="match status" value="1"/>
</dbReference>
<dbReference type="PANTHER" id="PTHR21141:SF58">
    <property type="entry name" value="ACIDIC RIBOSOMAL PROTEIN P2, PUTATIVE-RELATED"/>
    <property type="match status" value="1"/>
</dbReference>
<dbReference type="Pfam" id="PF00428">
    <property type="entry name" value="Ribosomal_60s"/>
    <property type="match status" value="1"/>
</dbReference>
<dbReference type="PRINTS" id="PR00456">
    <property type="entry name" value="RIBOSOMALP2"/>
</dbReference>
<feature type="chain" id="PRO_0000157668" description="Large ribosomal subunit protein P2-A">
    <location>
        <begin position="1"/>
        <end position="107"/>
    </location>
</feature>
<feature type="region of interest" description="Disordered" evidence="2">
    <location>
        <begin position="85"/>
        <end position="107"/>
    </location>
</feature>
<feature type="sequence variant" description="In variant A.">
    <original>VP</original>
    <variation>A</variation>
    <location>
        <begin position="31"/>
        <end position="32"/>
    </location>
</feature>
<feature type="sequence variant" description="In variant E.">
    <original>A</original>
    <variation>T</variation>
    <location>
        <position position="43"/>
    </location>
</feature>
<feature type="sequence variant" description="In variant D.">
    <original>A</original>
    <variation>S</variation>
    <location>
        <position position="46"/>
    </location>
</feature>
<feature type="sequence variant" description="In variant A.">
    <original>F</original>
    <variation>L</variation>
    <location>
        <position position="50"/>
    </location>
</feature>
<feature type="sequence variant" description="In variant C.">
    <original>T</original>
    <variation>A</variation>
    <location>
        <position position="55"/>
    </location>
</feature>
<feature type="sequence variant" description="In variant A.">
    <original>V</original>
    <variation>A</variation>
    <location>
        <position position="65"/>
    </location>
</feature>
<feature type="sequence variant" description="In variant C.">
    <original>T</original>
    <variation>A</variation>
    <location>
        <position position="66"/>
    </location>
</feature>
<feature type="sequence variant" description="In variant C.">
    <original>S</original>
    <variation>G</variation>
    <location>
        <position position="84"/>
    </location>
</feature>
<feature type="sequence variant" description="In variant E.">
    <original>A</original>
    <variation>T</variation>
    <location>
        <position position="92"/>
    </location>
</feature>
<feature type="sequence conflict" description="In Ref. 3; AAA30210." evidence="3" ref="3">
    <original>A</original>
    <variation>T</variation>
    <location>
        <position position="28"/>
    </location>
</feature>
<comment type="function">
    <text>Plays an important role in the elongation step of protein synthesis.</text>
</comment>
<comment type="subunit">
    <text>P1 and P2 exist as dimers at the large ribosomal subunit.</text>
</comment>
<comment type="PTM">
    <text evidence="1">Phosphorylated.</text>
</comment>
<comment type="similarity">
    <text evidence="3">Belongs to the eukaryotic ribosomal protein P1/P2 family.</text>
</comment>
<reference key="1">
    <citation type="journal article" date="1990" name="Nucleic Acids Res.">
        <title>Nucleotide cDNA and complete deduced amino acid sequence of a Trypanosoma cruzi ribosomal P protein (P-JL5).</title>
        <authorList>
            <person name="Schijman A.G."/>
            <person name="Dusetti N.J."/>
            <person name="Vazquez M.P."/>
            <person name="Lafon S."/>
            <person name="Levy-Yeyati P."/>
            <person name="Levin M.J."/>
        </authorList>
    </citation>
    <scope>NUCLEOTIDE SEQUENCE [MRNA]</scope>
    <source>
        <strain>Tulahuen 2</strain>
    </source>
</reference>
<reference key="2">
    <citation type="journal article" date="1994" name="Mol. Biochem. Parasitol.">
        <title>A short interspersed repetitive element provides a new 3' acceptor site for trans-splicing in certain ribosomal P2 beta protein genes of Trypanosoma cruzi.</title>
        <authorList>
            <person name="Vazquez M.P."/>
            <person name="Schijman A.G."/>
            <person name="Levin M.J."/>
        </authorList>
    </citation>
    <scope>NUCLEOTIDE SEQUENCE [GENOMIC DNA]</scope>
    <source>
        <strain>Tulahuen</strain>
    </source>
</reference>
<reference key="3">
    <citation type="journal article" date="1991" name="Mol. Biochem. Parasitol.">
        <title>Patients infected with Leishmania donovani chagasi can have antibodies that recognize heat shock and acidic ribosomal proteins of Trypanosoma cruzi.</title>
        <authorList>
            <person name="Nafziger D.F."/>
            <person name="Recinos R.F."/>
            <person name="Hunter C."/>
            <person name="Donelson J.E."/>
        </authorList>
    </citation>
    <scope>NUCLEOTIDE SEQUENCE [MRNA] OF 3-107</scope>
</reference>
<reference key="4">
    <citation type="journal article" date="1989" name="Am. J. Trop. Med. Hyg.">
        <title>Identification of major Trypanosoma cruzi antigenic determinants in chronic Chagas' heart disease.</title>
        <authorList>
            <person name="Levin M.J."/>
            <person name="Mesri E."/>
            <person name="Benarous R."/>
            <person name="Levitus G."/>
            <person name="Schijman A."/>
            <person name="Levy-Yeyati P."/>
            <person name="Chiale P.A."/>
            <person name="Ruiz A.M."/>
            <person name="Kahn A."/>
            <person name="Rosenbaum M.B."/>
            <person name="Torres H.N."/>
            <person name="Segura E.L."/>
        </authorList>
    </citation>
    <scope>PROTEIN SEQUENCE OF 97-107</scope>
</reference>
<reference key="5">
    <citation type="journal article" date="1995" name="Biochim. Biophys. Acta">
        <title>Cloning and sequence analysis of the TcP2 beta cDNA variants of Trypanosoma cruzi.</title>
        <authorList>
            <person name="Schijman A.G."/>
            <person name="Vazquez M.P."/>
            <person name="Dov C.B."/>
            <person name="Ghio S."/>
            <person name="Lorenzi H."/>
            <person name="Levin M.J."/>
        </authorList>
    </citation>
    <scope>VARIANTS</scope>
</reference>
<organism>
    <name type="scientific">Trypanosoma cruzi</name>
    <dbReference type="NCBI Taxonomy" id="5693"/>
    <lineage>
        <taxon>Eukaryota</taxon>
        <taxon>Discoba</taxon>
        <taxon>Euglenozoa</taxon>
        <taxon>Kinetoplastea</taxon>
        <taxon>Metakinetoplastina</taxon>
        <taxon>Trypanosomatida</taxon>
        <taxon>Trypanosomatidae</taxon>
        <taxon>Trypanosoma</taxon>
        <taxon>Schizotrypanum</taxon>
    </lineage>
</organism>
<name>RLA2_TRYCR</name>
<evidence type="ECO:0000250" key="1"/>
<evidence type="ECO:0000256" key="2">
    <source>
        <dbReference type="SAM" id="MobiDB-lite"/>
    </source>
</evidence>
<evidence type="ECO:0000305" key="3"/>